<gene>
    <name type="primary">exu</name>
    <name type="ORF">GJ18765</name>
</gene>
<comment type="function">
    <text evidence="1">Ensures the proper localization of the mRNA of the bicoid gene to the anterior regions of the oocyte thus playing a fundamental role in the establishment of the polarity of the oocyte. May bind the bcd mRNA (By similarity).</text>
</comment>
<dbReference type="EMBL" id="L22555">
    <property type="protein sequence ID" value="AAA28525.1"/>
    <property type="molecule type" value="Genomic_DNA"/>
</dbReference>
<dbReference type="EMBL" id="CH940662">
    <property type="protein sequence ID" value="EDW58856.1"/>
    <property type="molecule type" value="Genomic_DNA"/>
</dbReference>
<dbReference type="PIR" id="S47891">
    <property type="entry name" value="S47891"/>
</dbReference>
<dbReference type="RefSeq" id="XP_002059444.1">
    <property type="nucleotide sequence ID" value="XM_002059408.4"/>
</dbReference>
<dbReference type="RefSeq" id="XP_015024353.1">
    <property type="nucleotide sequence ID" value="XM_015168867.3"/>
</dbReference>
<dbReference type="RefSeq" id="XP_032292116.1">
    <property type="nucleotide sequence ID" value="XM_032436225.2"/>
</dbReference>
<dbReference type="SMR" id="Q24747"/>
<dbReference type="FunCoup" id="Q24747">
    <property type="interactions" value="62"/>
</dbReference>
<dbReference type="STRING" id="7244.Q24747"/>
<dbReference type="EnsemblMetazoa" id="FBtr0234690">
    <property type="protein sequence ID" value="FBpp0233182"/>
    <property type="gene ID" value="FBgn0013112"/>
</dbReference>
<dbReference type="EnsemblMetazoa" id="FBtr0435475">
    <property type="protein sequence ID" value="FBpp0392441"/>
    <property type="gene ID" value="FBgn0013112"/>
</dbReference>
<dbReference type="EnsemblMetazoa" id="XM_002059408.3">
    <property type="protein sequence ID" value="XP_002059444.1"/>
    <property type="gene ID" value="LOC6635821"/>
</dbReference>
<dbReference type="EnsemblMetazoa" id="XM_015168867.2">
    <property type="protein sequence ID" value="XP_015024353.1"/>
    <property type="gene ID" value="LOC6635821"/>
</dbReference>
<dbReference type="EnsemblMetazoa" id="XM_032436225.1">
    <property type="protein sequence ID" value="XP_032292116.1"/>
    <property type="gene ID" value="LOC6635821"/>
</dbReference>
<dbReference type="GeneID" id="6635821"/>
<dbReference type="KEGG" id="dvi:6635821"/>
<dbReference type="CTD" id="37345"/>
<dbReference type="eggNOG" id="ENOG502QVAD">
    <property type="taxonomic scope" value="Eukaryota"/>
</dbReference>
<dbReference type="HOGENOM" id="CLU_034404_1_0_1"/>
<dbReference type="InParanoid" id="Q24747"/>
<dbReference type="OMA" id="NWLEMLV"/>
<dbReference type="OrthoDB" id="8251179at2759"/>
<dbReference type="PhylomeDB" id="Q24747"/>
<dbReference type="Proteomes" id="UP000008792">
    <property type="component" value="Unassembled WGS sequence"/>
</dbReference>
<dbReference type="GO" id="GO:0042803">
    <property type="term" value="F:protein homodimerization activity"/>
    <property type="evidence" value="ECO:0007669"/>
    <property type="project" value="InterPro"/>
</dbReference>
<dbReference type="GO" id="GO:0003723">
    <property type="term" value="F:RNA binding"/>
    <property type="evidence" value="ECO:0007669"/>
    <property type="project" value="UniProtKB-KW"/>
</dbReference>
<dbReference type="GO" id="GO:0045450">
    <property type="term" value="P:bicoid mRNA localization"/>
    <property type="evidence" value="ECO:0007669"/>
    <property type="project" value="InterPro"/>
</dbReference>
<dbReference type="InterPro" id="IPR037998">
    <property type="entry name" value="Exu"/>
</dbReference>
<dbReference type="InterPro" id="IPR054362">
    <property type="entry name" value="Exu_RNase_H-like"/>
</dbReference>
<dbReference type="InterPro" id="IPR012337">
    <property type="entry name" value="RNaseH-like_sf"/>
</dbReference>
<dbReference type="InterPro" id="IPR040941">
    <property type="entry name" value="SAM_Exu"/>
</dbReference>
<dbReference type="PANTHER" id="PTHR12384">
    <property type="entry name" value="MATERNAL PROTEIN EXUPERANTIA"/>
    <property type="match status" value="1"/>
</dbReference>
<dbReference type="PANTHER" id="PTHR12384:SF2">
    <property type="entry name" value="MATERNAL PROTEIN EXUPERANTIA"/>
    <property type="match status" value="1"/>
</dbReference>
<dbReference type="Pfam" id="PF22123">
    <property type="entry name" value="Exu_RNase_H_like"/>
    <property type="match status" value="1"/>
</dbReference>
<dbReference type="Pfam" id="PF18609">
    <property type="entry name" value="SAM_Exu"/>
    <property type="match status" value="1"/>
</dbReference>
<dbReference type="SUPFAM" id="SSF53098">
    <property type="entry name" value="Ribonuclease H-like"/>
    <property type="match status" value="1"/>
</dbReference>
<keyword id="KW-0217">Developmental protein</keyword>
<keyword id="KW-1185">Reference proteome</keyword>
<keyword id="KW-0694">RNA-binding</keyword>
<accession>Q24747</accession>
<accession>B4ME91</accession>
<evidence type="ECO:0000250" key="1"/>
<evidence type="ECO:0000256" key="2">
    <source>
        <dbReference type="SAM" id="MobiDB-lite"/>
    </source>
</evidence>
<sequence length="486" mass="53957">MVAVSIDSVIDISAADQSTAASGVAIKDELPNGDYILVAVDIDTTGRRLIDEIVQLAAYTPTDHFEQYIMPYMNLNPAARQRHQVRVISIGFFRMLKSMQTYKIIKSKSEVAALKDFLDWLDQLKSKNPNTDGIVLLYHEERKFIPYMILQSLVKYGMLDRFTKTVKSFVNSFNLAKSSIGDTKHYSLRNLSKILSKAKEDNARVDNDNEADSNSSSADKHVKNGLQKERDEFDGSASVRAKLTFNVALQLSNLDSTEPESSEALSNLFNALKPFTEAISGDVKELDTQNVHLERQNSFRPVFLNYFKTTLYHRVRAVKFRIVLAENGFDLTTLNDIWTEKRIEGLDAALQGIASLKAEDKNELVELLDSFFDPAKVTIKPIIKPSTIRRRNKRNTPAHKPGVGSGSRSASDEFGAGGDKSQSVSSVPDSTTKTPSPIKNGGRPQRKRNSRPSLHTKEVKSAESALNNTAPASISLPNYVPIAATN</sequence>
<protein>
    <recommendedName>
        <fullName>Maternal protein exuperantia</fullName>
    </recommendedName>
</protein>
<reference key="1">
    <citation type="journal article" date="1994" name="Genetics">
        <title>Components acting in localization of bicoid mRNA are conserved among Drosophila species.</title>
        <authorList>
            <person name="Luk S.K.-S."/>
            <person name="Kilpatrick M."/>
            <person name="Kerr K."/>
            <person name="Macdonald P.M."/>
        </authorList>
    </citation>
    <scope>NUCLEOTIDE SEQUENCE [GENOMIC DNA]</scope>
</reference>
<reference key="2">
    <citation type="journal article" date="2007" name="Nature">
        <title>Evolution of genes and genomes on the Drosophila phylogeny.</title>
        <authorList>
            <consortium name="Drosophila 12 genomes consortium"/>
        </authorList>
    </citation>
    <scope>NUCLEOTIDE SEQUENCE [LARGE SCALE GENOMIC DNA]</scope>
    <source>
        <strain>Tucson 15010-1051.87</strain>
    </source>
</reference>
<feature type="chain" id="PRO_0000087146" description="Maternal protein exuperantia">
    <location>
        <begin position="1"/>
        <end position="486"/>
    </location>
</feature>
<feature type="region of interest" description="Disordered" evidence="2">
    <location>
        <begin position="202"/>
        <end position="233"/>
    </location>
</feature>
<feature type="region of interest" description="Disordered" evidence="2">
    <location>
        <begin position="386"/>
        <end position="477"/>
    </location>
</feature>
<feature type="compositionally biased region" description="Basic and acidic residues" evidence="2">
    <location>
        <begin position="218"/>
        <end position="233"/>
    </location>
</feature>
<feature type="compositionally biased region" description="Basic residues" evidence="2">
    <location>
        <begin position="387"/>
        <end position="397"/>
    </location>
</feature>
<feature type="compositionally biased region" description="Polar residues" evidence="2">
    <location>
        <begin position="420"/>
        <end position="437"/>
    </location>
</feature>
<feature type="compositionally biased region" description="Polar residues" evidence="2">
    <location>
        <begin position="464"/>
        <end position="476"/>
    </location>
</feature>
<name>EXU_DROVI</name>
<organism>
    <name type="scientific">Drosophila virilis</name>
    <name type="common">Fruit fly</name>
    <dbReference type="NCBI Taxonomy" id="7244"/>
    <lineage>
        <taxon>Eukaryota</taxon>
        <taxon>Metazoa</taxon>
        <taxon>Ecdysozoa</taxon>
        <taxon>Arthropoda</taxon>
        <taxon>Hexapoda</taxon>
        <taxon>Insecta</taxon>
        <taxon>Pterygota</taxon>
        <taxon>Neoptera</taxon>
        <taxon>Endopterygota</taxon>
        <taxon>Diptera</taxon>
        <taxon>Brachycera</taxon>
        <taxon>Muscomorpha</taxon>
        <taxon>Ephydroidea</taxon>
        <taxon>Drosophilidae</taxon>
        <taxon>Drosophila</taxon>
    </lineage>
</organism>
<proteinExistence type="inferred from homology"/>